<gene>
    <name type="primary">SLC10A2</name>
    <name type="synonym">NTCP2</name>
</gene>
<sequence length="347" mass="37729">MSNLTVGCLANATVCEGASCVAPESNFNAILSVVLSTVLTILLALVMFSMGCNVEIKKFLGHIRRPWGIFIGFLCQFGIMPLTGFVLAVAFGIMPIQAVVVLIMGCCPGGTASNILAYWVDGDMDLSVSMTTCSTLLALGMMPLCLYVYTKMWVDSGTIVIPYDNIGTSLVALVVPVSIGMFVNHKWPQKAKIILKVGSIAGAVLIVLIAVVGGILYQSAWIIEPKLWIIGTIFPMAGYSLGFFLARIAGQPWYRCRTVALETGMQNTQLCSTIVQLSFSPEDLTYVFTFPLIYSIFQIAFAAIFLGIYVAYRKCHGKNDAEFPDIKDTKTEPESSFHQMNGGFQPE</sequence>
<protein>
    <recommendedName>
        <fullName>Ileal sodium/bile acid cotransporter</fullName>
    </recommendedName>
    <alternativeName>
        <fullName>Apical sodium-dependent bile acid transporter</fullName>
        <shortName>ASBT</shortName>
    </alternativeName>
    <alternativeName>
        <fullName>Ileal Na(+)/bile acid cotransporter</fullName>
    </alternativeName>
    <alternativeName>
        <fullName>Ileal sodium-dependent bile acid transporter</fullName>
        <shortName>IBAT</shortName>
        <shortName>ISBT</shortName>
    </alternativeName>
    <alternativeName>
        <fullName>Na(+)-dependent ileal bile acid transporter</fullName>
    </alternativeName>
    <alternativeName>
        <fullName>Sodium/taurocholate cotransporting polypeptide, ileal</fullName>
    </alternativeName>
    <alternativeName>
        <fullName>Solute carrier family 10 member 2</fullName>
    </alternativeName>
</protein>
<comment type="function">
    <text evidence="3 6">Plays a critical role in the sodium-dependent reabsorption of bile acids from the lumen of the small intestine (PubMed:10484607). Transports various bile acids, unconjugated or conjugated, such as cholate and taurocholate (PubMed:10484607). Also responsible for bile acid transport in the renal proximal tubules, a salvage mechanism that helps conserve bile acids. Works collaboratively with the Na(+)-taurocholate cotransporting polypeptide (NTCP), the organic solute transporter (OST), and the bile salt export pump (BSEP), to ensure efficacious biological recycling of bile acids during enterohepatic circulation (By similarity).</text>
</comment>
<comment type="catalytic activity">
    <reaction evidence="6">
        <text>taurocholate(out) + 2 Na(+)(out) = taurocholate(in) + 2 Na(+)(in)</text>
        <dbReference type="Rhea" id="RHEA:71875"/>
        <dbReference type="ChEBI" id="CHEBI:29101"/>
        <dbReference type="ChEBI" id="CHEBI:36257"/>
    </reaction>
</comment>
<comment type="catalytic activity">
    <reaction evidence="6">
        <text>cholate(out) + 2 Na(+)(out) = cholate(in) + 2 Na(+)(in)</text>
        <dbReference type="Rhea" id="RHEA:71911"/>
        <dbReference type="ChEBI" id="CHEBI:29101"/>
        <dbReference type="ChEBI" id="CHEBI:29747"/>
    </reaction>
</comment>
<comment type="catalytic activity">
    <reaction evidence="6">
        <text>taurochenodeoxycholate(out) + 2 Na(+)(out) = taurochenodeoxycholate(in) + 2 Na(+)(in)</text>
        <dbReference type="Rhea" id="RHEA:71923"/>
        <dbReference type="ChEBI" id="CHEBI:9407"/>
        <dbReference type="ChEBI" id="CHEBI:29101"/>
    </reaction>
</comment>
<comment type="catalytic activity">
    <reaction evidence="6">
        <text>tauroursodeoxycholate(out) + 2 Na(+)(out) = tauroursodeoxycholate(in) + 2 Na(+)(in)</text>
        <dbReference type="Rhea" id="RHEA:71927"/>
        <dbReference type="ChEBI" id="CHEBI:29101"/>
        <dbReference type="ChEBI" id="CHEBI:132028"/>
    </reaction>
</comment>
<comment type="catalytic activity">
    <reaction evidence="6">
        <text>glycocholate(out) + 2 Na(+)(out) = glycocholate(in) + 2 Na(+)(in)</text>
        <dbReference type="Rhea" id="RHEA:71935"/>
        <dbReference type="ChEBI" id="CHEBI:29101"/>
        <dbReference type="ChEBI" id="CHEBI:29746"/>
    </reaction>
</comment>
<comment type="catalytic activity">
    <reaction evidence="6">
        <text>tauronorcholate(out) + 2 Na(+)(out) = tauronorcholate(in) + 2 Na(+)(in)</text>
        <dbReference type="Rhea" id="RHEA:71915"/>
        <dbReference type="ChEBI" id="CHEBI:29101"/>
        <dbReference type="ChEBI" id="CHEBI:191405"/>
    </reaction>
</comment>
<comment type="catalytic activity">
    <reaction evidence="6">
        <text>tauroallocholate(out) + 2 Na(+)(out) = tauroallocholate(in) + 2 Na(+)(in)</text>
        <dbReference type="Rhea" id="RHEA:51840"/>
        <dbReference type="ChEBI" id="CHEBI:29101"/>
        <dbReference type="ChEBI" id="CHEBI:191406"/>
    </reaction>
</comment>
<comment type="catalytic activity">
    <reaction evidence="6">
        <text>taurodeoxycholate(out) + 2 Na(+)(out) = taurodeoxycholate(in) + 2 Na(+)(in)</text>
        <dbReference type="Rhea" id="RHEA:72087"/>
        <dbReference type="ChEBI" id="CHEBI:29101"/>
        <dbReference type="ChEBI" id="CHEBI:36261"/>
    </reaction>
</comment>
<comment type="catalytic activity">
    <reaction evidence="6">
        <text>tauro-beta-muricholate(out) + 2 Na(+)(out) = tauro-beta-muricholate(in) + 2 Na(+)(in)</text>
        <dbReference type="Rhea" id="RHEA:72179"/>
        <dbReference type="ChEBI" id="CHEBI:29101"/>
        <dbReference type="ChEBI" id="CHEBI:133064"/>
    </reaction>
</comment>
<comment type="subunit">
    <text evidence="1">Monomer and homodimer.</text>
</comment>
<comment type="subcellular location">
    <subcellularLocation>
        <location>Membrane</location>
        <topology>Multi-pass membrane protein</topology>
    </subcellularLocation>
</comment>
<comment type="similarity">
    <text evidence="7">Belongs to the bile acid:sodium symporter (BASS) (TC 2.A.28) family.</text>
</comment>
<evidence type="ECO:0000250" key="1"/>
<evidence type="ECO:0000250" key="2">
    <source>
        <dbReference type="UniProtKB" id="P70172"/>
    </source>
</evidence>
<evidence type="ECO:0000250" key="3">
    <source>
        <dbReference type="UniProtKB" id="Q12908"/>
    </source>
</evidence>
<evidence type="ECO:0000255" key="4"/>
<evidence type="ECO:0000256" key="5">
    <source>
        <dbReference type="SAM" id="MobiDB-lite"/>
    </source>
</evidence>
<evidence type="ECO:0000269" key="6">
    <source>
    </source>
</evidence>
<evidence type="ECO:0000305" key="7"/>
<keyword id="KW-0325">Glycoprotein</keyword>
<keyword id="KW-0406">Ion transport</keyword>
<keyword id="KW-0445">Lipid transport</keyword>
<keyword id="KW-0472">Membrane</keyword>
<keyword id="KW-0597">Phosphoprotein</keyword>
<keyword id="KW-1185">Reference proteome</keyword>
<keyword id="KW-0915">Sodium</keyword>
<keyword id="KW-0739">Sodium transport</keyword>
<keyword id="KW-0769">Symport</keyword>
<keyword id="KW-0812">Transmembrane</keyword>
<keyword id="KW-1133">Transmembrane helix</keyword>
<keyword id="KW-0813">Transport</keyword>
<organism>
    <name type="scientific">Oryctolagus cuniculus</name>
    <name type="common">Rabbit</name>
    <dbReference type="NCBI Taxonomy" id="9986"/>
    <lineage>
        <taxon>Eukaryota</taxon>
        <taxon>Metazoa</taxon>
        <taxon>Chordata</taxon>
        <taxon>Craniata</taxon>
        <taxon>Vertebrata</taxon>
        <taxon>Euteleostomi</taxon>
        <taxon>Mammalia</taxon>
        <taxon>Eutheria</taxon>
        <taxon>Euarchontoglires</taxon>
        <taxon>Glires</taxon>
        <taxon>Lagomorpha</taxon>
        <taxon>Leporidae</taxon>
        <taxon>Oryctolagus</taxon>
    </lineage>
</organism>
<feature type="chain" id="PRO_0000052341" description="Ileal sodium/bile acid cotransporter">
    <location>
        <begin position="1"/>
        <end position="347"/>
    </location>
</feature>
<feature type="topological domain" description="Extracellular" evidence="4">
    <location>
        <begin position="1"/>
        <end position="29"/>
    </location>
</feature>
<feature type="transmembrane region" description="Helical" evidence="4">
    <location>
        <begin position="30"/>
        <end position="50"/>
    </location>
</feature>
<feature type="topological domain" description="Cytoplasmic" evidence="4">
    <location>
        <begin position="51"/>
        <end position="83"/>
    </location>
</feature>
<feature type="transmembrane region" description="Helical" evidence="4">
    <location>
        <begin position="84"/>
        <end position="104"/>
    </location>
</feature>
<feature type="topological domain" description="Extracellular" evidence="4">
    <location>
        <begin position="105"/>
        <end position="127"/>
    </location>
</feature>
<feature type="transmembrane region" description="Helical" evidence="4">
    <location>
        <begin position="128"/>
        <end position="148"/>
    </location>
</feature>
<feature type="topological domain" description="Cytoplasmic" evidence="4">
    <location>
        <begin position="149"/>
        <end position="158"/>
    </location>
</feature>
<feature type="transmembrane region" description="Helical" evidence="4">
    <location>
        <begin position="159"/>
        <end position="179"/>
    </location>
</feature>
<feature type="topological domain" description="Extracellular" evidence="4">
    <location>
        <begin position="180"/>
        <end position="196"/>
    </location>
</feature>
<feature type="transmembrane region" description="Helical" evidence="4">
    <location>
        <begin position="197"/>
        <end position="217"/>
    </location>
</feature>
<feature type="topological domain" description="Cytoplasmic" evidence="4">
    <location>
        <begin position="218"/>
        <end position="225"/>
    </location>
</feature>
<feature type="transmembrane region" description="Helical" evidence="4">
    <location>
        <begin position="226"/>
        <end position="246"/>
    </location>
</feature>
<feature type="topological domain" description="Extracellular" evidence="4">
    <location>
        <begin position="247"/>
        <end position="289"/>
    </location>
</feature>
<feature type="transmembrane region" description="Helical" evidence="4">
    <location>
        <begin position="290"/>
        <end position="310"/>
    </location>
</feature>
<feature type="topological domain" description="Cytoplasmic" evidence="4">
    <location>
        <begin position="311"/>
        <end position="347"/>
    </location>
</feature>
<feature type="region of interest" description="Disordered" evidence="5">
    <location>
        <begin position="323"/>
        <end position="347"/>
    </location>
</feature>
<feature type="compositionally biased region" description="Basic and acidic residues" evidence="5">
    <location>
        <begin position="323"/>
        <end position="335"/>
    </location>
</feature>
<feature type="modified residue" description="Phosphoserine" evidence="2">
    <location>
        <position position="336"/>
    </location>
</feature>
<feature type="glycosylation site" description="N-linked (GlcNAc...) asparagine" evidence="4">
    <location>
        <position position="3"/>
    </location>
</feature>
<feature type="glycosylation site" description="N-linked (GlcNAc...) asparagine" evidence="4">
    <location>
        <position position="11"/>
    </location>
</feature>
<accession>Q28727</accession>
<proteinExistence type="evidence at transcript level"/>
<reference key="1">
    <citation type="submission" date="1997-10" db="EMBL/GenBank/DDBJ databases">
        <title>Cloning of the rabbit ileal sodium-dependent bile acid transporter.</title>
        <authorList>
            <person name="Stengelin S."/>
            <person name="Apel S."/>
            <person name="Becker W."/>
            <person name="Maier M."/>
            <person name="Rosenberger J."/>
            <person name="Wess G."/>
            <person name="Kramer W."/>
        </authorList>
    </citation>
    <scope>NUCLEOTIDE SEQUENCE [GENOMIC DNA / MRNA]</scope>
    <source>
        <strain>New Zealand white</strain>
        <tissue>Ileum</tissue>
    </source>
</reference>
<reference key="2">
    <citation type="journal article" date="1999" name="J. Lipid Res.">
        <title>Substrate specificity of the ileal and the hepatic Na(+)/bile acid cotransporters of the rabbit. I. Transport studies with membrane vesicles and cell lines expressing the cloned transporters.</title>
        <authorList>
            <person name="Kramer W."/>
            <person name="Stengelin S."/>
            <person name="Baringhaus K.H."/>
            <person name="Enhsen A."/>
            <person name="Heuer H."/>
            <person name="Becker W."/>
            <person name="Corsiero D."/>
            <person name="Girbig F."/>
            <person name="Noll R."/>
            <person name="Weyland C."/>
        </authorList>
    </citation>
    <scope>FUNCTION</scope>
    <scope>TRANSPORT ACTIVITY</scope>
</reference>
<name>NTCP2_RABIT</name>
<dbReference type="EMBL" id="Z54357">
    <property type="protein sequence ID" value="CAA91184.1"/>
    <property type="molecule type" value="mRNA"/>
</dbReference>
<dbReference type="EMBL" id="AJ002005">
    <property type="protein sequence ID" value="CAA05135.1"/>
    <property type="molecule type" value="Genomic_DNA"/>
</dbReference>
<dbReference type="RefSeq" id="NP_001076233.1">
    <property type="nucleotide sequence ID" value="NM_001082764.1"/>
</dbReference>
<dbReference type="SMR" id="Q28727"/>
<dbReference type="FunCoup" id="Q28727">
    <property type="interactions" value="6"/>
</dbReference>
<dbReference type="STRING" id="9986.ENSOCUP00000004722"/>
<dbReference type="GlyCosmos" id="Q28727">
    <property type="glycosylation" value="2 sites, No reported glycans"/>
</dbReference>
<dbReference type="PaxDb" id="9986-ENSOCUP00000004722"/>
<dbReference type="Ensembl" id="ENSOCUT00000005444.4">
    <property type="protein sequence ID" value="ENSOCUP00000004722.3"/>
    <property type="gene ID" value="ENSOCUG00000005443.4"/>
</dbReference>
<dbReference type="GeneID" id="100009550"/>
<dbReference type="KEGG" id="ocu:100009550"/>
<dbReference type="CTD" id="6555"/>
<dbReference type="eggNOG" id="KOG2718">
    <property type="taxonomic scope" value="Eukaryota"/>
</dbReference>
<dbReference type="GeneTree" id="ENSGT00950000182808"/>
<dbReference type="HOGENOM" id="CLU_034788_7_5_1"/>
<dbReference type="InParanoid" id="Q28727"/>
<dbReference type="OMA" id="AHYVIMP"/>
<dbReference type="OrthoDB" id="203097at2759"/>
<dbReference type="Proteomes" id="UP000001811">
    <property type="component" value="Chromosome 8"/>
</dbReference>
<dbReference type="Bgee" id="ENSOCUG00000005443">
    <property type="expression patterns" value="Expressed in kidney and 4 other cell types or tissues"/>
</dbReference>
<dbReference type="ExpressionAtlas" id="Q28727">
    <property type="expression patterns" value="baseline"/>
</dbReference>
<dbReference type="GO" id="GO:0016324">
    <property type="term" value="C:apical plasma membrane"/>
    <property type="evidence" value="ECO:0007669"/>
    <property type="project" value="TreeGrafter"/>
</dbReference>
<dbReference type="GO" id="GO:0008508">
    <property type="term" value="F:bile acid:sodium symporter activity"/>
    <property type="evidence" value="ECO:0007669"/>
    <property type="project" value="TreeGrafter"/>
</dbReference>
<dbReference type="FunFam" id="1.20.1530.20:FF:000010">
    <property type="entry name" value="Solute carrier family 10 member 6"/>
    <property type="match status" value="1"/>
</dbReference>
<dbReference type="Gene3D" id="1.20.1530.20">
    <property type="match status" value="1"/>
</dbReference>
<dbReference type="InterPro" id="IPR002657">
    <property type="entry name" value="BilAc:Na_symport/Acr3"/>
</dbReference>
<dbReference type="InterPro" id="IPR004710">
    <property type="entry name" value="Bilac:Na_transpt"/>
</dbReference>
<dbReference type="InterPro" id="IPR038770">
    <property type="entry name" value="Na+/solute_symporter_sf"/>
</dbReference>
<dbReference type="NCBIfam" id="TIGR00841">
    <property type="entry name" value="bass"/>
    <property type="match status" value="1"/>
</dbReference>
<dbReference type="PANTHER" id="PTHR10361:SF19">
    <property type="entry name" value="ILEAL SODIUM_BILE ACID COTRANSPORTER"/>
    <property type="match status" value="1"/>
</dbReference>
<dbReference type="PANTHER" id="PTHR10361">
    <property type="entry name" value="SODIUM-BILE ACID COTRANSPORTER"/>
    <property type="match status" value="1"/>
</dbReference>
<dbReference type="Pfam" id="PF01758">
    <property type="entry name" value="SBF"/>
    <property type="match status" value="1"/>
</dbReference>